<reference key="1">
    <citation type="journal article" date="2004" name="Oncogene">
        <title>PRDM5 is silenced in human cancers and has growth suppressive activities.</title>
        <authorList>
            <person name="Deng Q."/>
            <person name="Huang S."/>
        </authorList>
    </citation>
    <scope>NUCLEOTIDE SEQUENCE [MRNA] (ISOFORM 1)</scope>
    <scope>FUNCTION</scope>
    <scope>SUBCELLULAR LOCATION</scope>
    <scope>TISSUE SPECIFICITY</scope>
</reference>
<reference key="2">
    <citation type="journal article" date="2004" name="Nat. Genet.">
        <title>Complete sequencing and characterization of 21,243 full-length human cDNAs.</title>
        <authorList>
            <person name="Ota T."/>
            <person name="Suzuki Y."/>
            <person name="Nishikawa T."/>
            <person name="Otsuki T."/>
            <person name="Sugiyama T."/>
            <person name="Irie R."/>
            <person name="Wakamatsu A."/>
            <person name="Hayashi K."/>
            <person name="Sato H."/>
            <person name="Nagai K."/>
            <person name="Kimura K."/>
            <person name="Makita H."/>
            <person name="Sekine M."/>
            <person name="Obayashi M."/>
            <person name="Nishi T."/>
            <person name="Shibahara T."/>
            <person name="Tanaka T."/>
            <person name="Ishii S."/>
            <person name="Yamamoto J."/>
            <person name="Saito K."/>
            <person name="Kawai Y."/>
            <person name="Isono Y."/>
            <person name="Nakamura Y."/>
            <person name="Nagahari K."/>
            <person name="Murakami K."/>
            <person name="Yasuda T."/>
            <person name="Iwayanagi T."/>
            <person name="Wagatsuma M."/>
            <person name="Shiratori A."/>
            <person name="Sudo H."/>
            <person name="Hosoiri T."/>
            <person name="Kaku Y."/>
            <person name="Kodaira H."/>
            <person name="Kondo H."/>
            <person name="Sugawara M."/>
            <person name="Takahashi M."/>
            <person name="Kanda K."/>
            <person name="Yokoi T."/>
            <person name="Furuya T."/>
            <person name="Kikkawa E."/>
            <person name="Omura Y."/>
            <person name="Abe K."/>
            <person name="Kamihara K."/>
            <person name="Katsuta N."/>
            <person name="Sato K."/>
            <person name="Tanikawa M."/>
            <person name="Yamazaki M."/>
            <person name="Ninomiya K."/>
            <person name="Ishibashi T."/>
            <person name="Yamashita H."/>
            <person name="Murakawa K."/>
            <person name="Fujimori K."/>
            <person name="Tanai H."/>
            <person name="Kimata M."/>
            <person name="Watanabe M."/>
            <person name="Hiraoka S."/>
            <person name="Chiba Y."/>
            <person name="Ishida S."/>
            <person name="Ono Y."/>
            <person name="Takiguchi S."/>
            <person name="Watanabe S."/>
            <person name="Yosida M."/>
            <person name="Hotuta T."/>
            <person name="Kusano J."/>
            <person name="Kanehori K."/>
            <person name="Takahashi-Fujii A."/>
            <person name="Hara H."/>
            <person name="Tanase T.-O."/>
            <person name="Nomura Y."/>
            <person name="Togiya S."/>
            <person name="Komai F."/>
            <person name="Hara R."/>
            <person name="Takeuchi K."/>
            <person name="Arita M."/>
            <person name="Imose N."/>
            <person name="Musashino K."/>
            <person name="Yuuki H."/>
            <person name="Oshima A."/>
            <person name="Sasaki N."/>
            <person name="Aotsuka S."/>
            <person name="Yoshikawa Y."/>
            <person name="Matsunawa H."/>
            <person name="Ichihara T."/>
            <person name="Shiohata N."/>
            <person name="Sano S."/>
            <person name="Moriya S."/>
            <person name="Momiyama H."/>
            <person name="Satoh N."/>
            <person name="Takami S."/>
            <person name="Terashima Y."/>
            <person name="Suzuki O."/>
            <person name="Nakagawa S."/>
            <person name="Senoh A."/>
            <person name="Mizoguchi H."/>
            <person name="Goto Y."/>
            <person name="Shimizu F."/>
            <person name="Wakebe H."/>
            <person name="Hishigaki H."/>
            <person name="Watanabe T."/>
            <person name="Sugiyama A."/>
            <person name="Takemoto M."/>
            <person name="Kawakami B."/>
            <person name="Yamazaki M."/>
            <person name="Watanabe K."/>
            <person name="Kumagai A."/>
            <person name="Itakura S."/>
            <person name="Fukuzumi Y."/>
            <person name="Fujimori Y."/>
            <person name="Komiyama M."/>
            <person name="Tashiro H."/>
            <person name="Tanigami A."/>
            <person name="Fujiwara T."/>
            <person name="Ono T."/>
            <person name="Yamada K."/>
            <person name="Fujii Y."/>
            <person name="Ozaki K."/>
            <person name="Hirao M."/>
            <person name="Ohmori Y."/>
            <person name="Kawabata A."/>
            <person name="Hikiji T."/>
            <person name="Kobatake N."/>
            <person name="Inagaki H."/>
            <person name="Ikema Y."/>
            <person name="Okamoto S."/>
            <person name="Okitani R."/>
            <person name="Kawakami T."/>
            <person name="Noguchi S."/>
            <person name="Itoh T."/>
            <person name="Shigeta K."/>
            <person name="Senba T."/>
            <person name="Matsumura K."/>
            <person name="Nakajima Y."/>
            <person name="Mizuno T."/>
            <person name="Morinaga M."/>
            <person name="Sasaki M."/>
            <person name="Togashi T."/>
            <person name="Oyama M."/>
            <person name="Hata H."/>
            <person name="Watanabe M."/>
            <person name="Komatsu T."/>
            <person name="Mizushima-Sugano J."/>
            <person name="Satoh T."/>
            <person name="Shirai Y."/>
            <person name="Takahashi Y."/>
            <person name="Nakagawa K."/>
            <person name="Okumura K."/>
            <person name="Nagase T."/>
            <person name="Nomura N."/>
            <person name="Kikuchi H."/>
            <person name="Masuho Y."/>
            <person name="Yamashita R."/>
            <person name="Nakai K."/>
            <person name="Yada T."/>
            <person name="Nakamura Y."/>
            <person name="Ohara O."/>
            <person name="Isogai T."/>
            <person name="Sugano S."/>
        </authorList>
    </citation>
    <scope>NUCLEOTIDE SEQUENCE [LARGE SCALE MRNA] (ISOFORM 3)</scope>
</reference>
<reference key="3">
    <citation type="journal article" date="2005" name="Nature">
        <title>Generation and annotation of the DNA sequences of human chromosomes 2 and 4.</title>
        <authorList>
            <person name="Hillier L.W."/>
            <person name="Graves T.A."/>
            <person name="Fulton R.S."/>
            <person name="Fulton L.A."/>
            <person name="Pepin K.H."/>
            <person name="Minx P."/>
            <person name="Wagner-McPherson C."/>
            <person name="Layman D."/>
            <person name="Wylie K."/>
            <person name="Sekhon M."/>
            <person name="Becker M.C."/>
            <person name="Fewell G.A."/>
            <person name="Delehaunty K.D."/>
            <person name="Miner T.L."/>
            <person name="Nash W.E."/>
            <person name="Kremitzki C."/>
            <person name="Oddy L."/>
            <person name="Du H."/>
            <person name="Sun H."/>
            <person name="Bradshaw-Cordum H."/>
            <person name="Ali J."/>
            <person name="Carter J."/>
            <person name="Cordes M."/>
            <person name="Harris A."/>
            <person name="Isak A."/>
            <person name="van Brunt A."/>
            <person name="Nguyen C."/>
            <person name="Du F."/>
            <person name="Courtney L."/>
            <person name="Kalicki J."/>
            <person name="Ozersky P."/>
            <person name="Abbott S."/>
            <person name="Armstrong J."/>
            <person name="Belter E.A."/>
            <person name="Caruso L."/>
            <person name="Cedroni M."/>
            <person name="Cotton M."/>
            <person name="Davidson T."/>
            <person name="Desai A."/>
            <person name="Elliott G."/>
            <person name="Erb T."/>
            <person name="Fronick C."/>
            <person name="Gaige T."/>
            <person name="Haakenson W."/>
            <person name="Haglund K."/>
            <person name="Holmes A."/>
            <person name="Harkins R."/>
            <person name="Kim K."/>
            <person name="Kruchowski S.S."/>
            <person name="Strong C.M."/>
            <person name="Grewal N."/>
            <person name="Goyea E."/>
            <person name="Hou S."/>
            <person name="Levy A."/>
            <person name="Martinka S."/>
            <person name="Mead K."/>
            <person name="McLellan M.D."/>
            <person name="Meyer R."/>
            <person name="Randall-Maher J."/>
            <person name="Tomlinson C."/>
            <person name="Dauphin-Kohlberg S."/>
            <person name="Kozlowicz-Reilly A."/>
            <person name="Shah N."/>
            <person name="Swearengen-Shahid S."/>
            <person name="Snider J."/>
            <person name="Strong J.T."/>
            <person name="Thompson J."/>
            <person name="Yoakum M."/>
            <person name="Leonard S."/>
            <person name="Pearman C."/>
            <person name="Trani L."/>
            <person name="Radionenko M."/>
            <person name="Waligorski J.E."/>
            <person name="Wang C."/>
            <person name="Rock S.M."/>
            <person name="Tin-Wollam A.-M."/>
            <person name="Maupin R."/>
            <person name="Latreille P."/>
            <person name="Wendl M.C."/>
            <person name="Yang S.-P."/>
            <person name="Pohl C."/>
            <person name="Wallis J.W."/>
            <person name="Spieth J."/>
            <person name="Bieri T.A."/>
            <person name="Berkowicz N."/>
            <person name="Nelson J.O."/>
            <person name="Osborne J."/>
            <person name="Ding L."/>
            <person name="Meyer R."/>
            <person name="Sabo A."/>
            <person name="Shotland Y."/>
            <person name="Sinha P."/>
            <person name="Wohldmann P.E."/>
            <person name="Cook L.L."/>
            <person name="Hickenbotham M.T."/>
            <person name="Eldred J."/>
            <person name="Williams D."/>
            <person name="Jones T.A."/>
            <person name="She X."/>
            <person name="Ciccarelli F.D."/>
            <person name="Izaurralde E."/>
            <person name="Taylor J."/>
            <person name="Schmutz J."/>
            <person name="Myers R.M."/>
            <person name="Cox D.R."/>
            <person name="Huang X."/>
            <person name="McPherson J.D."/>
            <person name="Mardis E.R."/>
            <person name="Clifton S.W."/>
            <person name="Warren W.C."/>
            <person name="Chinwalla A.T."/>
            <person name="Eddy S.R."/>
            <person name="Marra M.A."/>
            <person name="Ovcharenko I."/>
            <person name="Furey T.S."/>
            <person name="Miller W."/>
            <person name="Eichler E.E."/>
            <person name="Bork P."/>
            <person name="Suyama M."/>
            <person name="Torrents D."/>
            <person name="Waterston R.H."/>
            <person name="Wilson R.K."/>
        </authorList>
    </citation>
    <scope>NUCLEOTIDE SEQUENCE [LARGE SCALE GENOMIC DNA]</scope>
</reference>
<reference key="4">
    <citation type="journal article" date="2004" name="Genome Res.">
        <title>The status, quality, and expansion of the NIH full-length cDNA project: the Mammalian Gene Collection (MGC).</title>
        <authorList>
            <consortium name="The MGC Project Team"/>
        </authorList>
    </citation>
    <scope>NUCLEOTIDE SEQUENCE [LARGE SCALE MRNA] (ISOFORMS 2; 3 AND 4)</scope>
    <source>
        <tissue>Brain</tissue>
    </source>
</reference>
<reference key="5">
    <citation type="journal article" date="2007" name="Clin. Cancer Res.">
        <title>PRDM5 identified as a target of epigenetic silencing in colorectal and gastric cancer.</title>
        <authorList>
            <person name="Watanabe Y."/>
            <person name="Toyota M."/>
            <person name="Kondo Y."/>
            <person name="Suzuki H."/>
            <person name="Imai T."/>
            <person name="Ohe-Toyota M."/>
            <person name="Maruyama R."/>
            <person name="Nojima M."/>
            <person name="Sasaki Y."/>
            <person name="Sekido Y."/>
            <person name="Hiratsuka H."/>
            <person name="Shinomura Y."/>
            <person name="Imai K."/>
            <person name="Itoh F."/>
            <person name="Tokino T."/>
        </authorList>
    </citation>
    <scope>TISSUE SPECIFICITY</scope>
</reference>
<reference key="6">
    <citation type="journal article" date="2007" name="Mol. Cell. Biol.">
        <title>Epigenetic regulation of protein-coding and microRNA genes by the Gfi1-interacting tumor suppressor PRDM5.</title>
        <authorList>
            <person name="Duan Z."/>
            <person name="Person R.E."/>
            <person name="Lee H.-H."/>
            <person name="Huang S."/>
            <person name="Donadieu J."/>
            <person name="Badolato R."/>
            <person name="Grimes H.L."/>
            <person name="Papayannopoulou T."/>
            <person name="Horwitz M.S."/>
        </authorList>
    </citation>
    <scope>FUNCTION</scope>
    <scope>INTERACTION WITH EHMT2; GFI1 AND HDAC1</scope>
    <scope>SUBCELLULAR LOCATION</scope>
</reference>
<reference key="7">
    <citation type="journal article" date="2011" name="Am. J. Hum. Genet.">
        <title>Mutations in PRDM5 in brittle cornea syndrome identify a pathway regulating extracellular matrix development and maintenance.</title>
        <authorList>
            <person name="Burkitt Wright E.M."/>
            <person name="Spencer H.L."/>
            <person name="Daly S.B."/>
            <person name="Manson F.D."/>
            <person name="Zeef L.A."/>
            <person name="Urquhart J."/>
            <person name="Zoppi N."/>
            <person name="Bonshek R."/>
            <person name="Tosounidis I."/>
            <person name="Mohan M."/>
            <person name="Madden C."/>
            <person name="Dodds A."/>
            <person name="Chandler K.E."/>
            <person name="Banka S."/>
            <person name="Au L."/>
            <person name="Clayton-Smith J."/>
            <person name="Khan N."/>
            <person name="Biesecker L.G."/>
            <person name="Wilson M."/>
            <person name="Rohrbach M."/>
            <person name="Colombi M."/>
            <person name="Giunta C."/>
            <person name="Black G.C."/>
        </authorList>
    </citation>
    <scope>VARIANT BCS2 CYS-107</scope>
    <scope>FUNCTION</scope>
</reference>
<protein>
    <recommendedName>
        <fullName>PR domain zinc finger protein 5</fullName>
        <ecNumber>2.1.1.-</ecNumber>
    </recommendedName>
    <alternativeName>
        <fullName>PR domain-containing protein 5</fullName>
    </alternativeName>
</protein>
<comment type="function">
    <text evidence="3 4 6">Sequence-specific DNA-binding transcription factor. Represses transcription at least in part by recruitment of the histone methyltransferase EHMT2/G9A and histone deacetylases such as HDAC1. Regulates hematopoiesis-associated protein-coding and microRNA (miRNA) genes. May regulate the expression of proteins involved in extracellular matrix development and maintenance, including fibrillar collagens, such as COL4A1 and COL11A1, connective tissue components, such as HAPLN1, and molecules regulating cell migration and adhesion, including EDIL3 and TGFB2. May cause G2/M arrest and apoptosis in cancer cells.</text>
</comment>
<comment type="subunit">
    <text evidence="4">Interacts with EHMT2/G9A, GFI1 and HDAC1.</text>
</comment>
<comment type="interaction">
    <interactant intactId="EBI-4292031">
        <id>Q9NQX1</id>
    </interactant>
    <interactant intactId="EBI-744366">
        <id>Q96KQ7</id>
        <label>EHMT2</label>
    </interactant>
    <organismsDiffer>false</organismsDiffer>
    <experiments>3</experiments>
</comment>
<comment type="interaction">
    <interactant intactId="EBI-4292031">
        <id>Q9NQX1</id>
    </interactant>
    <interactant intactId="EBI-949368">
        <id>Q99684</id>
        <label>GFI1</label>
    </interactant>
    <organismsDiffer>false</organismsDiffer>
    <experiments>2</experiments>
</comment>
<comment type="interaction">
    <interactant intactId="EBI-4292031">
        <id>Q9NQX1</id>
    </interactant>
    <interactant intactId="EBI-301834">
        <id>Q13547</id>
        <label>HDAC1</label>
    </interactant>
    <organismsDiffer>false</organismsDiffer>
    <experiments>3</experiments>
</comment>
<comment type="interaction">
    <interactant intactId="EBI-12859340">
        <id>Q9NQX1-2</id>
    </interactant>
    <interactant intactId="EBI-718580">
        <id>Q9NX46</id>
        <label>ADPRS</label>
    </interactant>
    <organismsDiffer>false</organismsDiffer>
    <experiments>3</experiments>
</comment>
<comment type="interaction">
    <interactant intactId="EBI-12859340">
        <id>Q9NQX1-2</id>
    </interactant>
    <interactant intactId="EBI-10206780">
        <id>P35523</id>
        <label>CLCN1</label>
    </interactant>
    <organismsDiffer>false</organismsDiffer>
    <experiments>3</experiments>
</comment>
<comment type="interaction">
    <interactant intactId="EBI-12859340">
        <id>Q9NQX1-2</id>
    </interactant>
    <interactant intactId="EBI-12013806">
        <id>Q6NZ36-4</id>
        <label>FAAP20</label>
    </interactant>
    <organismsDiffer>false</organismsDiffer>
    <experiments>3</experiments>
</comment>
<comment type="interaction">
    <interactant intactId="EBI-12859340">
        <id>Q9NQX1-2</id>
    </interactant>
    <interactant intactId="EBI-12104696">
        <id>Q9H4M3-2</id>
        <label>FBXO44</label>
    </interactant>
    <organismsDiffer>false</organismsDiffer>
    <experiments>3</experiments>
</comment>
<comment type="interaction">
    <interactant intactId="EBI-12859340">
        <id>Q9NQX1-2</id>
    </interactant>
    <interactant intactId="EBI-740818">
        <id>Q9Y272</id>
        <label>RASD1</label>
    </interactant>
    <organismsDiffer>false</organismsDiffer>
    <experiments>3</experiments>
</comment>
<comment type="interaction">
    <interactant intactId="EBI-12859340">
        <id>Q9NQX1-2</id>
    </interactant>
    <interactant intactId="EBI-1383454">
        <id>P29597</id>
        <label>TYK2</label>
    </interactant>
    <organismsDiffer>false</organismsDiffer>
    <experiments>3</experiments>
</comment>
<comment type="interaction">
    <interactant intactId="EBI-12859340">
        <id>Q9NQX1-2</id>
    </interactant>
    <interactant intactId="EBI-3917984">
        <id>P32241</id>
        <label>VIPR1</label>
    </interactant>
    <organismsDiffer>false</organismsDiffer>
    <experiments>3</experiments>
</comment>
<comment type="subcellular location">
    <subcellularLocation>
        <location evidence="3 4">Nucleus</location>
    </subcellularLocation>
</comment>
<comment type="alternative products">
    <event type="alternative splicing"/>
    <isoform>
        <id>Q9NQX1-1</id>
        <name>1</name>
        <sequence type="displayed"/>
    </isoform>
    <isoform>
        <id>Q9NQX1-2</id>
        <name>2</name>
        <sequence type="described" ref="VSP_035654"/>
    </isoform>
    <isoform>
        <id>Q9NQX1-3</id>
        <name>3</name>
        <sequence type="described" ref="VSP_035652 VSP_035653"/>
    </isoform>
    <isoform>
        <id>Q9NQX1-4</id>
        <name>4</name>
        <sequence type="described" ref="VSP_035654 VSP_054395 VSP_054396"/>
    </isoform>
</comment>
<comment type="tissue specificity">
    <text evidence="3 5">Widely expressed with highest levels in colon and ovary. Tends to be silenced in breast, colorectal, gastric and liver cancer tissues.</text>
</comment>
<comment type="disease" evidence="6">
    <disease id="DI-03176">
        <name>Brittle cornea syndrome 2</name>
        <acronym>BCS2</acronym>
        <description>A disorder characterized by extreme corneal thinning resulting in corneal rupture after minor trauma, blue sclerae, keratoconus or keratoglobus, hyperelasticity of the skin, and hypermobile joints.</description>
        <dbReference type="MIM" id="614170"/>
    </disease>
    <text>The disease is caused by variants affecting the gene represented in this entry.</text>
</comment>
<comment type="similarity">
    <text evidence="2">Belongs to the class V-like SAM-binding methyltransferase superfamily.</text>
</comment>
<proteinExistence type="evidence at protein level"/>
<name>PRDM5_HUMAN</name>
<organism>
    <name type="scientific">Homo sapiens</name>
    <name type="common">Human</name>
    <dbReference type="NCBI Taxonomy" id="9606"/>
    <lineage>
        <taxon>Eukaryota</taxon>
        <taxon>Metazoa</taxon>
        <taxon>Chordata</taxon>
        <taxon>Craniata</taxon>
        <taxon>Vertebrata</taxon>
        <taxon>Euteleostomi</taxon>
        <taxon>Mammalia</taxon>
        <taxon>Eutheria</taxon>
        <taxon>Euarchontoglires</taxon>
        <taxon>Primates</taxon>
        <taxon>Haplorrhini</taxon>
        <taxon>Catarrhini</taxon>
        <taxon>Hominidae</taxon>
        <taxon>Homo</taxon>
    </lineage>
</organism>
<keyword id="KW-0002">3D-structure</keyword>
<keyword id="KW-0010">Activator</keyword>
<keyword id="KW-0025">Alternative splicing</keyword>
<keyword id="KW-0156">Chromatin regulator</keyword>
<keyword id="KW-0225">Disease variant</keyword>
<keyword id="KW-0238">DNA-binding</keyword>
<keyword id="KW-0479">Metal-binding</keyword>
<keyword id="KW-0489">Methyltransferase</keyword>
<keyword id="KW-0539">Nucleus</keyword>
<keyword id="KW-1267">Proteomics identification</keyword>
<keyword id="KW-1185">Reference proteome</keyword>
<keyword id="KW-0677">Repeat</keyword>
<keyword id="KW-0678">Repressor</keyword>
<keyword id="KW-0949">S-adenosyl-L-methionine</keyword>
<keyword id="KW-0804">Transcription</keyword>
<keyword id="KW-0805">Transcription regulation</keyword>
<keyword id="KW-0808">Transferase</keyword>
<keyword id="KW-0862">Zinc</keyword>
<keyword id="KW-0863">Zinc-finger</keyword>
<feature type="chain" id="PRO_0000047761" description="PR domain zinc finger protein 5">
    <location>
        <begin position="1"/>
        <end position="630"/>
    </location>
</feature>
<feature type="domain" description="SET" evidence="2">
    <location>
        <begin position="8"/>
        <end position="124"/>
    </location>
</feature>
<feature type="zinc finger region" description="C2H2-type 1" evidence="1">
    <location>
        <begin position="167"/>
        <end position="190"/>
    </location>
</feature>
<feature type="zinc finger region" description="C2H2-type 2; atypical" evidence="1">
    <location>
        <begin position="199"/>
        <end position="221"/>
    </location>
</feature>
<feature type="zinc finger region" description="C2H2-type 3; atypical" evidence="1">
    <location>
        <begin position="234"/>
        <end position="256"/>
    </location>
</feature>
<feature type="zinc finger region" description="C2H2-type 4" evidence="1">
    <location>
        <begin position="262"/>
        <end position="287"/>
    </location>
</feature>
<feature type="zinc finger region" description="C2H2-type 5" evidence="1">
    <location>
        <begin position="295"/>
        <end position="317"/>
    </location>
</feature>
<feature type="zinc finger region" description="C2H2-type 6" evidence="1">
    <location>
        <begin position="320"/>
        <end position="342"/>
    </location>
</feature>
<feature type="zinc finger region" description="C2H2-type 7" evidence="1">
    <location>
        <begin position="348"/>
        <end position="370"/>
    </location>
</feature>
<feature type="zinc finger region" description="C2H2-type 8" evidence="1">
    <location>
        <begin position="376"/>
        <end position="398"/>
    </location>
</feature>
<feature type="zinc finger region" description="C2H2-type 9" evidence="1">
    <location>
        <begin position="404"/>
        <end position="426"/>
    </location>
</feature>
<feature type="zinc finger region" description="C2H2-type 10" evidence="1">
    <location>
        <begin position="432"/>
        <end position="455"/>
    </location>
</feature>
<feature type="zinc finger region" description="C2H2-type 11" evidence="1">
    <location>
        <begin position="461"/>
        <end position="483"/>
    </location>
</feature>
<feature type="zinc finger region" description="C2H2-type 12" evidence="1">
    <location>
        <begin position="489"/>
        <end position="511"/>
    </location>
</feature>
<feature type="zinc finger region" description="C2H2-type 13" evidence="1">
    <location>
        <begin position="517"/>
        <end position="539"/>
    </location>
</feature>
<feature type="zinc finger region" description="C2H2-type 14" evidence="1">
    <location>
        <begin position="545"/>
        <end position="567"/>
    </location>
</feature>
<feature type="zinc finger region" description="C2H2-type 15" evidence="1">
    <location>
        <begin position="573"/>
        <end position="595"/>
    </location>
</feature>
<feature type="zinc finger region" description="C2H2-type 16" evidence="1">
    <location>
        <begin position="602"/>
        <end position="625"/>
    </location>
</feature>
<feature type="splice variant" id="VSP_035652" description="In isoform 3." evidence="7 8">
    <original>EGENIFYLAVE</original>
    <variation>DKNLGPAEWRG</variation>
    <location>
        <begin position="101"/>
        <end position="111"/>
    </location>
</feature>
<feature type="splice variant" id="VSP_035653" description="In isoform 3." evidence="7 8">
    <location>
        <begin position="112"/>
        <end position="630"/>
    </location>
</feature>
<feature type="splice variant" id="VSP_035654" description="In isoform 2 and isoform 4." evidence="8">
    <location>
        <begin position="218"/>
        <end position="248"/>
    </location>
</feature>
<feature type="splice variant" id="VSP_054395" description="In isoform 4." evidence="8">
    <original>RPYQCPYCEKGFSKNDGL</original>
    <variation>AVQVLRVQQGLQPEARPG</variation>
    <location>
        <begin position="515"/>
        <end position="532"/>
    </location>
</feature>
<feature type="splice variant" id="VSP_054396" description="In isoform 4." evidence="8">
    <location>
        <begin position="533"/>
        <end position="630"/>
    </location>
</feature>
<feature type="sequence variant" id="VAR_066393" description="In BCS2; dbSNP:rs387907111." evidence="6">
    <original>Y</original>
    <variation>C</variation>
    <location>
        <position position="107"/>
    </location>
</feature>
<feature type="sequence conflict" description="In Ref. 1; AAF78077." evidence="9" ref="1">
    <original>R</original>
    <variation>K</variation>
    <location>
        <position position="261"/>
    </location>
</feature>
<feature type="strand" evidence="10">
    <location>
        <begin position="4"/>
        <end position="6"/>
    </location>
</feature>
<feature type="strand" evidence="10">
    <location>
        <begin position="10"/>
        <end position="14"/>
    </location>
</feature>
<feature type="strand" evidence="10">
    <location>
        <begin position="16"/>
        <end position="27"/>
    </location>
</feature>
<feature type="strand" evidence="10">
    <location>
        <begin position="41"/>
        <end position="43"/>
    </location>
</feature>
<feature type="strand" evidence="10">
    <location>
        <begin position="57"/>
        <end position="61"/>
    </location>
</feature>
<feature type="strand" evidence="10">
    <location>
        <begin position="67"/>
        <end position="72"/>
    </location>
</feature>
<feature type="helix" evidence="10">
    <location>
        <begin position="76"/>
        <end position="78"/>
    </location>
</feature>
<feature type="helix" evidence="10">
    <location>
        <begin position="81"/>
        <end position="84"/>
    </location>
</feature>
<feature type="turn" evidence="10">
    <location>
        <begin position="91"/>
        <end position="93"/>
    </location>
</feature>
<feature type="strand" evidence="10">
    <location>
        <begin position="96"/>
        <end position="101"/>
    </location>
</feature>
<feature type="strand" evidence="10">
    <location>
        <begin position="104"/>
        <end position="109"/>
    </location>
</feature>
<feature type="strand" evidence="10">
    <location>
        <begin position="120"/>
        <end position="122"/>
    </location>
</feature>
<accession>Q9NQX1</accession>
<accession>Q0VAI9</accession>
<accession>Q0VAJ0</accession>
<accession>Q6NXQ7</accession>
<dbReference type="EC" id="2.1.1.-"/>
<dbReference type="EMBL" id="AF272897">
    <property type="protein sequence ID" value="AAF78077.1"/>
    <property type="molecule type" value="mRNA"/>
</dbReference>
<dbReference type="EMBL" id="AK056352">
    <property type="protein sequence ID" value="BAG51686.1"/>
    <property type="molecule type" value="mRNA"/>
</dbReference>
<dbReference type="EMBL" id="AC025741">
    <property type="status" value="NOT_ANNOTATED_CDS"/>
    <property type="molecule type" value="Genomic_DNA"/>
</dbReference>
<dbReference type="EMBL" id="AC104068">
    <property type="status" value="NOT_ANNOTATED_CDS"/>
    <property type="molecule type" value="Genomic_DNA"/>
</dbReference>
<dbReference type="EMBL" id="AC104795">
    <property type="status" value="NOT_ANNOTATED_CDS"/>
    <property type="molecule type" value="Genomic_DNA"/>
</dbReference>
<dbReference type="EMBL" id="BC066942">
    <property type="protein sequence ID" value="AAH66942.1"/>
    <property type="molecule type" value="mRNA"/>
</dbReference>
<dbReference type="EMBL" id="BC121037">
    <property type="protein sequence ID" value="AAI21038.1"/>
    <property type="molecule type" value="mRNA"/>
</dbReference>
<dbReference type="EMBL" id="BC121038">
    <property type="protein sequence ID" value="AAI21039.1"/>
    <property type="molecule type" value="mRNA"/>
</dbReference>
<dbReference type="CCDS" id="CCDS3716.1">
    <molecule id="Q9NQX1-1"/>
</dbReference>
<dbReference type="CCDS" id="CCDS75187.1">
    <molecule id="Q9NQX1-4"/>
</dbReference>
<dbReference type="CCDS" id="CCDS75188.1">
    <molecule id="Q9NQX1-2"/>
</dbReference>
<dbReference type="RefSeq" id="NP_001287752.1">
    <molecule id="Q9NQX1-2"/>
    <property type="nucleotide sequence ID" value="NM_001300823.2"/>
</dbReference>
<dbReference type="RefSeq" id="NP_001287753.1">
    <molecule id="Q9NQX1-4"/>
    <property type="nucleotide sequence ID" value="NM_001300824.2"/>
</dbReference>
<dbReference type="RefSeq" id="NP_061169.2">
    <molecule id="Q9NQX1-1"/>
    <property type="nucleotide sequence ID" value="NM_018699.3"/>
</dbReference>
<dbReference type="RefSeq" id="XP_047305515.1">
    <molecule id="Q9NQX1-4"/>
    <property type="nucleotide sequence ID" value="XM_047449559.1"/>
</dbReference>
<dbReference type="RefSeq" id="XP_054204807.1">
    <molecule id="Q9NQX1-4"/>
    <property type="nucleotide sequence ID" value="XM_054348832.1"/>
</dbReference>
<dbReference type="PDB" id="6XAZ">
    <property type="method" value="X-ray"/>
    <property type="resolution" value="1.70 A"/>
    <property type="chains" value="A/B=1-127"/>
</dbReference>
<dbReference type="PDBsum" id="6XAZ"/>
<dbReference type="SMR" id="Q9NQX1"/>
<dbReference type="BioGRID" id="116287">
    <property type="interactions" value="57"/>
</dbReference>
<dbReference type="FunCoup" id="Q9NQX1">
    <property type="interactions" value="1747"/>
</dbReference>
<dbReference type="IntAct" id="Q9NQX1">
    <property type="interactions" value="55"/>
</dbReference>
<dbReference type="MINT" id="Q9NQX1"/>
<dbReference type="STRING" id="9606.ENSP00000264808"/>
<dbReference type="MoonDB" id="Q9NQX1">
    <property type="type" value="Predicted"/>
</dbReference>
<dbReference type="GlyGen" id="Q9NQX1">
    <property type="glycosylation" value="1 site, 1 O-linked glycan (1 site)"/>
</dbReference>
<dbReference type="iPTMnet" id="Q9NQX1"/>
<dbReference type="PhosphoSitePlus" id="Q9NQX1"/>
<dbReference type="SwissPalm" id="Q9NQX1"/>
<dbReference type="BioMuta" id="PRDM5"/>
<dbReference type="DMDM" id="212276458"/>
<dbReference type="MassIVE" id="Q9NQX1"/>
<dbReference type="PaxDb" id="9606-ENSP00000264808"/>
<dbReference type="PeptideAtlas" id="Q9NQX1"/>
<dbReference type="ProteomicsDB" id="58796"/>
<dbReference type="ProteomicsDB" id="82218">
    <molecule id="Q9NQX1-1"/>
</dbReference>
<dbReference type="ProteomicsDB" id="82219">
    <molecule id="Q9NQX1-2"/>
</dbReference>
<dbReference type="ProteomicsDB" id="82220">
    <molecule id="Q9NQX1-3"/>
</dbReference>
<dbReference type="Antibodypedia" id="26690">
    <property type="antibodies" value="244 antibodies from 29 providers"/>
</dbReference>
<dbReference type="DNASU" id="11107"/>
<dbReference type="Ensembl" id="ENST00000264808.8">
    <molecule id="Q9NQX1-1"/>
    <property type="protein sequence ID" value="ENSP00000264808.3"/>
    <property type="gene ID" value="ENSG00000138738.11"/>
</dbReference>
<dbReference type="Ensembl" id="ENST00000394435.2">
    <molecule id="Q9NQX1-3"/>
    <property type="protein sequence ID" value="ENSP00000377955.2"/>
    <property type="gene ID" value="ENSG00000138738.11"/>
</dbReference>
<dbReference type="Ensembl" id="ENST00000428209.6">
    <molecule id="Q9NQX1-2"/>
    <property type="protein sequence ID" value="ENSP00000404832.2"/>
    <property type="gene ID" value="ENSG00000138738.11"/>
</dbReference>
<dbReference type="Ensembl" id="ENST00000515109.5">
    <molecule id="Q9NQX1-4"/>
    <property type="protein sequence ID" value="ENSP00000422309.1"/>
    <property type="gene ID" value="ENSG00000138738.11"/>
</dbReference>
<dbReference type="GeneID" id="11107"/>
<dbReference type="KEGG" id="hsa:11107"/>
<dbReference type="MANE-Select" id="ENST00000264808.8">
    <property type="protein sequence ID" value="ENSP00000264808.3"/>
    <property type="RefSeq nucleotide sequence ID" value="NM_018699.4"/>
    <property type="RefSeq protein sequence ID" value="NP_061169.2"/>
</dbReference>
<dbReference type="UCSC" id="uc003idn.4">
    <molecule id="Q9NQX1-1"/>
    <property type="organism name" value="human"/>
</dbReference>
<dbReference type="AGR" id="HGNC:9349"/>
<dbReference type="CTD" id="11107"/>
<dbReference type="DisGeNET" id="11107"/>
<dbReference type="GeneCards" id="PRDM5"/>
<dbReference type="HGNC" id="HGNC:9349">
    <property type="gene designation" value="PRDM5"/>
</dbReference>
<dbReference type="HPA" id="ENSG00000138738">
    <property type="expression patterns" value="Low tissue specificity"/>
</dbReference>
<dbReference type="MalaCards" id="PRDM5"/>
<dbReference type="MIM" id="614161">
    <property type="type" value="gene"/>
</dbReference>
<dbReference type="MIM" id="614170">
    <property type="type" value="phenotype"/>
</dbReference>
<dbReference type="neXtProt" id="NX_Q9NQX1"/>
<dbReference type="OpenTargets" id="ENSG00000138738"/>
<dbReference type="Orphanet" id="90354">
    <property type="disease" value="Brittle cornea syndrome"/>
</dbReference>
<dbReference type="PharmGKB" id="PA33717"/>
<dbReference type="VEuPathDB" id="HostDB:ENSG00000138738"/>
<dbReference type="eggNOG" id="KOG1721">
    <property type="taxonomic scope" value="Eukaryota"/>
</dbReference>
<dbReference type="eggNOG" id="KOG2461">
    <property type="taxonomic scope" value="Eukaryota"/>
</dbReference>
<dbReference type="GeneTree" id="ENSGT00940000158340"/>
<dbReference type="HOGENOM" id="CLU_002678_75_0_1"/>
<dbReference type="InParanoid" id="Q9NQX1"/>
<dbReference type="OMA" id="YKNHKKX"/>
<dbReference type="OrthoDB" id="6077919at2759"/>
<dbReference type="PAN-GO" id="Q9NQX1">
    <property type="GO annotations" value="6 GO annotations based on evolutionary models"/>
</dbReference>
<dbReference type="PhylomeDB" id="Q9NQX1"/>
<dbReference type="TreeFam" id="TF106478"/>
<dbReference type="PathwayCommons" id="Q9NQX1"/>
<dbReference type="SignaLink" id="Q9NQX1"/>
<dbReference type="BioGRID-ORCS" id="11107">
    <property type="hits" value="6 hits in 1178 CRISPR screens"/>
</dbReference>
<dbReference type="ChiTaRS" id="PRDM5">
    <property type="organism name" value="human"/>
</dbReference>
<dbReference type="GenomeRNAi" id="11107"/>
<dbReference type="Pharos" id="Q9NQX1">
    <property type="development level" value="Tbio"/>
</dbReference>
<dbReference type="PRO" id="PR:Q9NQX1"/>
<dbReference type="Proteomes" id="UP000005640">
    <property type="component" value="Chromosome 4"/>
</dbReference>
<dbReference type="RNAct" id="Q9NQX1">
    <property type="molecule type" value="protein"/>
</dbReference>
<dbReference type="Bgee" id="ENSG00000138738">
    <property type="expression patterns" value="Expressed in calcaneal tendon and 128 other cell types or tissues"/>
</dbReference>
<dbReference type="ExpressionAtlas" id="Q9NQX1">
    <property type="expression patterns" value="baseline and differential"/>
</dbReference>
<dbReference type="GO" id="GO:0016604">
    <property type="term" value="C:nuclear body"/>
    <property type="evidence" value="ECO:0000314"/>
    <property type="project" value="HPA"/>
</dbReference>
<dbReference type="GO" id="GO:0005730">
    <property type="term" value="C:nucleolus"/>
    <property type="evidence" value="ECO:0000314"/>
    <property type="project" value="HPA"/>
</dbReference>
<dbReference type="GO" id="GO:0005654">
    <property type="term" value="C:nucleoplasm"/>
    <property type="evidence" value="ECO:0000314"/>
    <property type="project" value="HPA"/>
</dbReference>
<dbReference type="GO" id="GO:0005634">
    <property type="term" value="C:nucleus"/>
    <property type="evidence" value="ECO:0000314"/>
    <property type="project" value="UniProtKB"/>
</dbReference>
<dbReference type="GO" id="GO:0003700">
    <property type="term" value="F:DNA-binding transcription factor activity"/>
    <property type="evidence" value="ECO:0000318"/>
    <property type="project" value="GO_Central"/>
</dbReference>
<dbReference type="GO" id="GO:0140297">
    <property type="term" value="F:DNA-binding transcription factor binding"/>
    <property type="evidence" value="ECO:0000314"/>
    <property type="project" value="UniProtKB"/>
</dbReference>
<dbReference type="GO" id="GO:0001227">
    <property type="term" value="F:DNA-binding transcription repressor activity, RNA polymerase II-specific"/>
    <property type="evidence" value="ECO:0000314"/>
    <property type="project" value="NTNU_SB"/>
</dbReference>
<dbReference type="GO" id="GO:0008168">
    <property type="term" value="F:methyltransferase activity"/>
    <property type="evidence" value="ECO:0007669"/>
    <property type="project" value="UniProtKB-KW"/>
</dbReference>
<dbReference type="GO" id="GO:0000978">
    <property type="term" value="F:RNA polymerase II cis-regulatory region sequence-specific DNA binding"/>
    <property type="evidence" value="ECO:0000314"/>
    <property type="project" value="NTNU_SB"/>
</dbReference>
<dbReference type="GO" id="GO:0000977">
    <property type="term" value="F:RNA polymerase II transcription regulatory region sequence-specific DNA binding"/>
    <property type="evidence" value="ECO:0000318"/>
    <property type="project" value="GO_Central"/>
</dbReference>
<dbReference type="GO" id="GO:0043565">
    <property type="term" value="F:sequence-specific DNA binding"/>
    <property type="evidence" value="ECO:0000314"/>
    <property type="project" value="UniProtKB"/>
</dbReference>
<dbReference type="GO" id="GO:0000976">
    <property type="term" value="F:transcription cis-regulatory region binding"/>
    <property type="evidence" value="ECO:0000314"/>
    <property type="project" value="UniProtKB"/>
</dbReference>
<dbReference type="GO" id="GO:0008270">
    <property type="term" value="F:zinc ion binding"/>
    <property type="evidence" value="ECO:0007669"/>
    <property type="project" value="UniProtKB-KW"/>
</dbReference>
<dbReference type="GO" id="GO:1990830">
    <property type="term" value="P:cellular response to leukemia inhibitory factor"/>
    <property type="evidence" value="ECO:0007669"/>
    <property type="project" value="Ensembl"/>
</dbReference>
<dbReference type="GO" id="GO:0006325">
    <property type="term" value="P:chromatin organization"/>
    <property type="evidence" value="ECO:0007669"/>
    <property type="project" value="UniProtKB-KW"/>
</dbReference>
<dbReference type="GO" id="GO:0032259">
    <property type="term" value="P:methylation"/>
    <property type="evidence" value="ECO:0007669"/>
    <property type="project" value="UniProtKB-KW"/>
</dbReference>
<dbReference type="GO" id="GO:0000278">
    <property type="term" value="P:mitotic cell cycle"/>
    <property type="evidence" value="ECO:0000315"/>
    <property type="project" value="UniProtKB"/>
</dbReference>
<dbReference type="GO" id="GO:0045892">
    <property type="term" value="P:negative regulation of DNA-templated transcription"/>
    <property type="evidence" value="ECO:0000314"/>
    <property type="project" value="UniProtKB"/>
</dbReference>
<dbReference type="GO" id="GO:0000122">
    <property type="term" value="P:negative regulation of transcription by RNA polymerase II"/>
    <property type="evidence" value="ECO:0000314"/>
    <property type="project" value="NTNU_SB"/>
</dbReference>
<dbReference type="GO" id="GO:0045944">
    <property type="term" value="P:positive regulation of transcription by RNA polymerase II"/>
    <property type="evidence" value="ECO:0000315"/>
    <property type="project" value="ARUK-UCL"/>
</dbReference>
<dbReference type="GO" id="GO:1903053">
    <property type="term" value="P:regulation of extracellular matrix organization"/>
    <property type="evidence" value="ECO:0000315"/>
    <property type="project" value="ARUK-UCL"/>
</dbReference>
<dbReference type="CDD" id="cd19190">
    <property type="entry name" value="PR-SET_PRDM5"/>
    <property type="match status" value="1"/>
</dbReference>
<dbReference type="FunFam" id="2.170.270.10:FF:000015">
    <property type="entry name" value="Zinc finger protein"/>
    <property type="match status" value="1"/>
</dbReference>
<dbReference type="FunFam" id="3.30.160.60:FF:000407">
    <property type="entry name" value="Zinc finger protein"/>
    <property type="match status" value="1"/>
</dbReference>
<dbReference type="FunFam" id="3.30.160.60:FF:000476">
    <property type="entry name" value="Zinc finger protein"/>
    <property type="match status" value="1"/>
</dbReference>
<dbReference type="FunFam" id="3.30.160.60:FF:000510">
    <property type="entry name" value="Zinc finger protein"/>
    <property type="match status" value="1"/>
</dbReference>
<dbReference type="FunFam" id="3.30.160.60:FF:000518">
    <property type="entry name" value="Zinc finger protein"/>
    <property type="match status" value="1"/>
</dbReference>
<dbReference type="FunFam" id="3.30.160.60:FF:000527">
    <property type="entry name" value="Zinc finger protein"/>
    <property type="match status" value="1"/>
</dbReference>
<dbReference type="FunFam" id="3.30.160.60:FF:000533">
    <property type="entry name" value="Zinc finger protein"/>
    <property type="match status" value="1"/>
</dbReference>
<dbReference type="FunFam" id="3.30.160.60:FF:000636">
    <property type="entry name" value="Zinc finger protein"/>
    <property type="match status" value="1"/>
</dbReference>
<dbReference type="FunFam" id="3.30.160.60:FF:000659">
    <property type="entry name" value="Zinc finger protein"/>
    <property type="match status" value="1"/>
</dbReference>
<dbReference type="FunFam" id="3.30.160.60:FF:000880">
    <property type="entry name" value="Zinc finger protein"/>
    <property type="match status" value="1"/>
</dbReference>
<dbReference type="FunFam" id="3.30.160.60:FF:001691">
    <property type="entry name" value="Zinc finger protein"/>
    <property type="match status" value="1"/>
</dbReference>
<dbReference type="FunFam" id="3.30.160.60:FF:000546">
    <property type="entry name" value="Zinc finger protein 333"/>
    <property type="match status" value="1"/>
</dbReference>
<dbReference type="FunFam" id="3.30.160.60:FF:000102">
    <property type="entry name" value="zinc finger protein 850 isoform X1"/>
    <property type="match status" value="1"/>
</dbReference>
<dbReference type="Gene3D" id="3.30.160.60">
    <property type="entry name" value="Classic Zinc Finger"/>
    <property type="match status" value="13"/>
</dbReference>
<dbReference type="Gene3D" id="2.170.270.10">
    <property type="entry name" value="SET domain"/>
    <property type="match status" value="1"/>
</dbReference>
<dbReference type="InterPro" id="IPR044415">
    <property type="entry name" value="PRDM5_PR-SET"/>
</dbReference>
<dbReference type="InterPro" id="IPR001214">
    <property type="entry name" value="SET_dom"/>
</dbReference>
<dbReference type="InterPro" id="IPR046341">
    <property type="entry name" value="SET_dom_sf"/>
</dbReference>
<dbReference type="InterPro" id="IPR050331">
    <property type="entry name" value="Zinc_finger"/>
</dbReference>
<dbReference type="InterPro" id="IPR036236">
    <property type="entry name" value="Znf_C2H2_sf"/>
</dbReference>
<dbReference type="InterPro" id="IPR013087">
    <property type="entry name" value="Znf_C2H2_type"/>
</dbReference>
<dbReference type="InterPro" id="IPR017125">
    <property type="entry name" value="Znf_PRDM5-like"/>
</dbReference>
<dbReference type="PANTHER" id="PTHR16515:SF66">
    <property type="entry name" value="C2H2-TYPE DOMAIN-CONTAINING PROTEIN"/>
    <property type="match status" value="1"/>
</dbReference>
<dbReference type="PANTHER" id="PTHR16515">
    <property type="entry name" value="PR DOMAIN ZINC FINGER PROTEIN"/>
    <property type="match status" value="1"/>
</dbReference>
<dbReference type="Pfam" id="PF21549">
    <property type="entry name" value="PRDM2_PR"/>
    <property type="match status" value="1"/>
</dbReference>
<dbReference type="Pfam" id="PF00096">
    <property type="entry name" value="zf-C2H2"/>
    <property type="match status" value="12"/>
</dbReference>
<dbReference type="Pfam" id="PF13912">
    <property type="entry name" value="zf-C2H2_6"/>
    <property type="match status" value="2"/>
</dbReference>
<dbReference type="Pfam" id="PF12874">
    <property type="entry name" value="zf-met"/>
    <property type="match status" value="1"/>
</dbReference>
<dbReference type="PIRSF" id="PIRSF037162">
    <property type="entry name" value="PRDM"/>
    <property type="match status" value="1"/>
</dbReference>
<dbReference type="SMART" id="SM00317">
    <property type="entry name" value="SET"/>
    <property type="match status" value="1"/>
</dbReference>
<dbReference type="SMART" id="SM00355">
    <property type="entry name" value="ZnF_C2H2"/>
    <property type="match status" value="16"/>
</dbReference>
<dbReference type="SUPFAM" id="SSF57667">
    <property type="entry name" value="beta-beta-alpha zinc fingers"/>
    <property type="match status" value="8"/>
</dbReference>
<dbReference type="SUPFAM" id="SSF82199">
    <property type="entry name" value="SET domain"/>
    <property type="match status" value="1"/>
</dbReference>
<dbReference type="PROSITE" id="PS50280">
    <property type="entry name" value="SET"/>
    <property type="match status" value="1"/>
</dbReference>
<dbReference type="PROSITE" id="PS00028">
    <property type="entry name" value="ZINC_FINGER_C2H2_1"/>
    <property type="match status" value="14"/>
</dbReference>
<dbReference type="PROSITE" id="PS50157">
    <property type="entry name" value="ZINC_FINGER_C2H2_2"/>
    <property type="match status" value="16"/>
</dbReference>
<evidence type="ECO:0000255" key="1">
    <source>
        <dbReference type="PROSITE-ProRule" id="PRU00042"/>
    </source>
</evidence>
<evidence type="ECO:0000255" key="2">
    <source>
        <dbReference type="PROSITE-ProRule" id="PRU00190"/>
    </source>
</evidence>
<evidence type="ECO:0000269" key="3">
    <source>
    </source>
</evidence>
<evidence type="ECO:0000269" key="4">
    <source>
    </source>
</evidence>
<evidence type="ECO:0000269" key="5">
    <source>
    </source>
</evidence>
<evidence type="ECO:0000269" key="6">
    <source>
    </source>
</evidence>
<evidence type="ECO:0000303" key="7">
    <source>
    </source>
</evidence>
<evidence type="ECO:0000303" key="8">
    <source>
    </source>
</evidence>
<evidence type="ECO:0000305" key="9"/>
<evidence type="ECO:0007829" key="10">
    <source>
        <dbReference type="PDB" id="6XAZ"/>
    </source>
</evidence>
<gene>
    <name type="primary">PRDM5</name>
    <name type="synonym">PFM2</name>
</gene>
<sequence>MLGMYVPDRFSLKSSRVQDGMGLYTARRVRKGEKFGPFAGEKRMPEDLDENMDYRLMWEVRGSKGEVLYILDATNPRHSNWLRFVHEAPSQEQKNLAAIQEGENIFYLAVEDIETDTELLIGYLDSDMEAEEEEQQIMTVIKEGEVENSRRQSTAGRKDRLGCKEDYACPQCESSFTSEDILAEHLQTLHQKPTEEKEFKCKNCGKKFPVKQALQRHVLQCTAKSSLKESSRSFQCSVCNSSFSSASSFEQHQETCRGDARFVCKADSCGKRLKSKDALKRHQENVHTGDPKKKLICSVCNKKCSSASSLQEHRKIHEIFDCQECMKKFISANQLKRHMITHSEKRPYNCEICNKSFKRLDQVGAHKVIHSEDKPYKCKLCGKGFAHRNVYKNHKKTHSEERPFQCEECKALFRTPFSLQRHLLIHNSERTFKCHHCDATFKRKDTLNVHVQVVHERHKKYRCELCNKAFVTPSVLRSHKKTHTGEKEKICPYCGQKFASSGTLRVHIRSHTGERPYQCPYCEKGFSKNDGLKMHIRTHTREKPYKCSECSKAFSQKRGLDEHKRTHTGEKPFQCDVCDLAFSLKKMLIRHKMTHNPNRPLAECQFCHKKFTRNDYLKVHMDNIHGVADS</sequence>